<comment type="function">
    <text evidence="1">Specifically methylates the N4 position of cytidine in position 1402 (C1402) of 16S rRNA.</text>
</comment>
<comment type="catalytic activity">
    <reaction evidence="1">
        <text>cytidine(1402) in 16S rRNA + S-adenosyl-L-methionine = N(4)-methylcytidine(1402) in 16S rRNA + S-adenosyl-L-homocysteine + H(+)</text>
        <dbReference type="Rhea" id="RHEA:42928"/>
        <dbReference type="Rhea" id="RHEA-COMP:10286"/>
        <dbReference type="Rhea" id="RHEA-COMP:10287"/>
        <dbReference type="ChEBI" id="CHEBI:15378"/>
        <dbReference type="ChEBI" id="CHEBI:57856"/>
        <dbReference type="ChEBI" id="CHEBI:59789"/>
        <dbReference type="ChEBI" id="CHEBI:74506"/>
        <dbReference type="ChEBI" id="CHEBI:82748"/>
        <dbReference type="EC" id="2.1.1.199"/>
    </reaction>
</comment>
<comment type="subcellular location">
    <subcellularLocation>
        <location evidence="1">Cytoplasm</location>
    </subcellularLocation>
</comment>
<comment type="similarity">
    <text evidence="1">Belongs to the methyltransferase superfamily. RsmH family.</text>
</comment>
<keyword id="KW-0963">Cytoplasm</keyword>
<keyword id="KW-0489">Methyltransferase</keyword>
<keyword id="KW-0698">rRNA processing</keyword>
<keyword id="KW-0949">S-adenosyl-L-methionine</keyword>
<keyword id="KW-0808">Transferase</keyword>
<dbReference type="EC" id="2.1.1.199" evidence="1"/>
<dbReference type="EMBL" id="CP001279">
    <property type="protein sequence ID" value="ACM93172.1"/>
    <property type="molecule type" value="Genomic_DNA"/>
</dbReference>
<dbReference type="RefSeq" id="WP_015902224.1">
    <property type="nucleotide sequence ID" value="NC_012115.1"/>
</dbReference>
<dbReference type="SMR" id="B9L9G3"/>
<dbReference type="STRING" id="598659.NAMH_0868"/>
<dbReference type="KEGG" id="nam:NAMH_0868"/>
<dbReference type="eggNOG" id="COG0275">
    <property type="taxonomic scope" value="Bacteria"/>
</dbReference>
<dbReference type="HOGENOM" id="CLU_038422_3_0_7"/>
<dbReference type="OrthoDB" id="9806637at2"/>
<dbReference type="Proteomes" id="UP000000448">
    <property type="component" value="Chromosome"/>
</dbReference>
<dbReference type="GO" id="GO:0005737">
    <property type="term" value="C:cytoplasm"/>
    <property type="evidence" value="ECO:0007669"/>
    <property type="project" value="UniProtKB-SubCell"/>
</dbReference>
<dbReference type="GO" id="GO:0071424">
    <property type="term" value="F:rRNA (cytosine-N4-)-methyltransferase activity"/>
    <property type="evidence" value="ECO:0007669"/>
    <property type="project" value="UniProtKB-UniRule"/>
</dbReference>
<dbReference type="GO" id="GO:0070475">
    <property type="term" value="P:rRNA base methylation"/>
    <property type="evidence" value="ECO:0007669"/>
    <property type="project" value="UniProtKB-UniRule"/>
</dbReference>
<dbReference type="Gene3D" id="1.10.150.170">
    <property type="entry name" value="Putative methyltransferase TM0872, insert domain"/>
    <property type="match status" value="1"/>
</dbReference>
<dbReference type="Gene3D" id="3.40.50.150">
    <property type="entry name" value="Vaccinia Virus protein VP39"/>
    <property type="match status" value="1"/>
</dbReference>
<dbReference type="HAMAP" id="MF_01007">
    <property type="entry name" value="16SrRNA_methyltr_H"/>
    <property type="match status" value="1"/>
</dbReference>
<dbReference type="InterPro" id="IPR002903">
    <property type="entry name" value="RsmH"/>
</dbReference>
<dbReference type="InterPro" id="IPR023397">
    <property type="entry name" value="SAM-dep_MeTrfase_MraW_recog"/>
</dbReference>
<dbReference type="InterPro" id="IPR029063">
    <property type="entry name" value="SAM-dependent_MTases_sf"/>
</dbReference>
<dbReference type="NCBIfam" id="TIGR00006">
    <property type="entry name" value="16S rRNA (cytosine(1402)-N(4))-methyltransferase RsmH"/>
    <property type="match status" value="1"/>
</dbReference>
<dbReference type="PANTHER" id="PTHR11265:SF0">
    <property type="entry name" value="12S RRNA N4-METHYLCYTIDINE METHYLTRANSFERASE"/>
    <property type="match status" value="1"/>
</dbReference>
<dbReference type="PANTHER" id="PTHR11265">
    <property type="entry name" value="S-ADENOSYL-METHYLTRANSFERASE MRAW"/>
    <property type="match status" value="1"/>
</dbReference>
<dbReference type="Pfam" id="PF01795">
    <property type="entry name" value="Methyltransf_5"/>
    <property type="match status" value="1"/>
</dbReference>
<dbReference type="PIRSF" id="PIRSF004486">
    <property type="entry name" value="MraW"/>
    <property type="match status" value="1"/>
</dbReference>
<dbReference type="SUPFAM" id="SSF81799">
    <property type="entry name" value="Putative methyltransferase TM0872, insert domain"/>
    <property type="match status" value="1"/>
</dbReference>
<dbReference type="SUPFAM" id="SSF53335">
    <property type="entry name" value="S-adenosyl-L-methionine-dependent methyltransferases"/>
    <property type="match status" value="1"/>
</dbReference>
<reference key="1">
    <citation type="journal article" date="2009" name="PLoS Genet.">
        <title>Adaptations to submarine hydrothermal environments exemplified by the genome of Nautilia profundicola.</title>
        <authorList>
            <person name="Campbell B.J."/>
            <person name="Smith J.L."/>
            <person name="Hanson T.E."/>
            <person name="Klotz M.G."/>
            <person name="Stein L.Y."/>
            <person name="Lee C.K."/>
            <person name="Wu D."/>
            <person name="Robinson J.M."/>
            <person name="Khouri H.M."/>
            <person name="Eisen J.A."/>
            <person name="Cary S.C."/>
        </authorList>
    </citation>
    <scope>NUCLEOTIDE SEQUENCE [LARGE SCALE GENOMIC DNA]</scope>
    <source>
        <strain>ATCC BAA-1463 / DSM 18972 / AmH</strain>
    </source>
</reference>
<organism>
    <name type="scientific">Nautilia profundicola (strain ATCC BAA-1463 / DSM 18972 / AmH)</name>
    <dbReference type="NCBI Taxonomy" id="598659"/>
    <lineage>
        <taxon>Bacteria</taxon>
        <taxon>Pseudomonadati</taxon>
        <taxon>Campylobacterota</taxon>
        <taxon>Epsilonproteobacteria</taxon>
        <taxon>Nautiliales</taxon>
        <taxon>Nautiliaceae</taxon>
        <taxon>Nautilia</taxon>
    </lineage>
</organism>
<proteinExistence type="inferred from homology"/>
<name>RSMH_NAUPA</name>
<evidence type="ECO:0000255" key="1">
    <source>
        <dbReference type="HAMAP-Rule" id="MF_01007"/>
    </source>
</evidence>
<feature type="chain" id="PRO_0000387003" description="Ribosomal RNA small subunit methyltransferase H">
    <location>
        <begin position="1"/>
        <end position="306"/>
    </location>
</feature>
<feature type="binding site" evidence="1">
    <location>
        <begin position="37"/>
        <end position="39"/>
    </location>
    <ligand>
        <name>S-adenosyl-L-methionine</name>
        <dbReference type="ChEBI" id="CHEBI:59789"/>
    </ligand>
</feature>
<feature type="binding site" evidence="1">
    <location>
        <position position="56"/>
    </location>
    <ligand>
        <name>S-adenosyl-L-methionine</name>
        <dbReference type="ChEBI" id="CHEBI:59789"/>
    </ligand>
</feature>
<feature type="binding site" evidence="1">
    <location>
        <position position="102"/>
    </location>
    <ligand>
        <name>S-adenosyl-L-methionine</name>
        <dbReference type="ChEBI" id="CHEBI:59789"/>
    </ligand>
</feature>
<feature type="binding site" evidence="1">
    <location>
        <position position="109"/>
    </location>
    <ligand>
        <name>S-adenosyl-L-methionine</name>
        <dbReference type="ChEBI" id="CHEBI:59789"/>
    </ligand>
</feature>
<sequence length="306" mass="34860">MRIEDIPHIPVLLNETIGLYNDMPENGYFIDCTLGFGGHSEAILEKYPNIKLIGIDQDAEAMHFAKNRLARFGDRVQFINKRASSALEELPEDLPVSGILADIGVSSYQLDNKERGFTFESEELDMRMDKTQDFSAKDVVNFYSKEDLERIIKNYGECRRFKKVVSAIISKRPIKSNRELADILGHIGLRDKKDLAKIFQAIRIEVNNELNELEKILKNAKKLAKNGTILGIITFHSLEDRIVKNTFKEWSKKCICPPEAIRCECGGNNQLGKILTKKPLVASKEEIKMNPRSRSAKLRGFQFIRG</sequence>
<protein>
    <recommendedName>
        <fullName evidence="1">Ribosomal RNA small subunit methyltransferase H</fullName>
        <ecNumber evidence="1">2.1.1.199</ecNumber>
    </recommendedName>
    <alternativeName>
        <fullName evidence="1">16S rRNA m(4)C1402 methyltransferase</fullName>
    </alternativeName>
    <alternativeName>
        <fullName evidence="1">rRNA (cytosine-N(4)-)-methyltransferase RsmH</fullName>
    </alternativeName>
</protein>
<gene>
    <name evidence="1" type="primary">rsmH</name>
    <name type="synonym">mraW</name>
    <name type="ordered locus">NAMH_0868</name>
</gene>
<accession>B9L9G3</accession>